<proteinExistence type="inferred from homology"/>
<gene>
    <name evidence="1" type="primary">pyrF</name>
    <name type="ordered locus">Tcr_1201</name>
</gene>
<feature type="chain" id="PRO_0000241926" description="Orotidine 5'-phosphate decarboxylase">
    <location>
        <begin position="1"/>
        <end position="236"/>
    </location>
</feature>
<feature type="active site" description="Proton donor" evidence="1">
    <location>
        <position position="67"/>
    </location>
</feature>
<feature type="binding site" evidence="1">
    <location>
        <position position="16"/>
    </location>
    <ligand>
        <name>substrate</name>
    </ligand>
</feature>
<feature type="binding site" evidence="1">
    <location>
        <position position="38"/>
    </location>
    <ligand>
        <name>substrate</name>
    </ligand>
</feature>
<feature type="binding site" evidence="1">
    <location>
        <begin position="65"/>
        <end position="74"/>
    </location>
    <ligand>
        <name>substrate</name>
    </ligand>
</feature>
<feature type="binding site" evidence="1">
    <location>
        <position position="124"/>
    </location>
    <ligand>
        <name>substrate</name>
    </ligand>
</feature>
<feature type="binding site" evidence="1">
    <location>
        <position position="185"/>
    </location>
    <ligand>
        <name>substrate</name>
    </ligand>
</feature>
<feature type="binding site" evidence="1">
    <location>
        <position position="194"/>
    </location>
    <ligand>
        <name>substrate</name>
    </ligand>
</feature>
<feature type="binding site" evidence="1">
    <location>
        <position position="214"/>
    </location>
    <ligand>
        <name>substrate</name>
    </ligand>
</feature>
<feature type="binding site" evidence="1">
    <location>
        <position position="215"/>
    </location>
    <ligand>
        <name>substrate</name>
    </ligand>
</feature>
<sequence>MNQSVQPDPKVVVALDFPKTQLAEDFARHLDPQLCRLKVGKELFALGGPQLVEKLITQGFEVFLDLKYHDIPNTVAMACRAAAEMGVWMVNVHSLGGRKMMEAAKEAVLSASHQPLLIGVTILTSMETEDLAEIGLTGTPKENVLRLAKLAHSSGLDGVVSSAQEASDLRKEIGQDFCLVTPGIRPANADVNDQKRIMTPADAMAAGSSYLVVGRPITQAKDPIAVLNEINASIGR</sequence>
<evidence type="ECO:0000255" key="1">
    <source>
        <dbReference type="HAMAP-Rule" id="MF_01200"/>
    </source>
</evidence>
<reference key="1">
    <citation type="journal article" date="2006" name="PLoS Biol.">
        <title>The genome of deep-sea vent chemolithoautotroph Thiomicrospira crunogena XCL-2.</title>
        <authorList>
            <person name="Scott K.M."/>
            <person name="Sievert S.M."/>
            <person name="Abril F.N."/>
            <person name="Ball L.A."/>
            <person name="Barrett C.J."/>
            <person name="Blake R.A."/>
            <person name="Boller A.J."/>
            <person name="Chain P.S.G."/>
            <person name="Clark J.A."/>
            <person name="Davis C.R."/>
            <person name="Detter C."/>
            <person name="Do K.F."/>
            <person name="Dobrinski K.P."/>
            <person name="Faza B.I."/>
            <person name="Fitzpatrick K.A."/>
            <person name="Freyermuth S.K."/>
            <person name="Harmer T.L."/>
            <person name="Hauser L.J."/>
            <person name="Huegler M."/>
            <person name="Kerfeld C.A."/>
            <person name="Klotz M.G."/>
            <person name="Kong W.W."/>
            <person name="Land M."/>
            <person name="Lapidus A."/>
            <person name="Larimer F.W."/>
            <person name="Longo D.L."/>
            <person name="Lucas S."/>
            <person name="Malfatti S.A."/>
            <person name="Massey S.E."/>
            <person name="Martin D.D."/>
            <person name="McCuddin Z."/>
            <person name="Meyer F."/>
            <person name="Moore J.L."/>
            <person name="Ocampo L.H. Jr."/>
            <person name="Paul J.H."/>
            <person name="Paulsen I.T."/>
            <person name="Reep D.K."/>
            <person name="Ren Q."/>
            <person name="Ross R.L."/>
            <person name="Sato P.Y."/>
            <person name="Thomas P."/>
            <person name="Tinkham L.E."/>
            <person name="Zeruth G.T."/>
        </authorList>
    </citation>
    <scope>NUCLEOTIDE SEQUENCE [LARGE SCALE GENOMIC DNA]</scope>
    <source>
        <strain>DSM 25203 / XCL-2</strain>
    </source>
</reference>
<protein>
    <recommendedName>
        <fullName evidence="1">Orotidine 5'-phosphate decarboxylase</fullName>
        <ecNumber evidence="1">4.1.1.23</ecNumber>
    </recommendedName>
    <alternativeName>
        <fullName evidence="1">OMP decarboxylase</fullName>
        <shortName evidence="1">OMPDCase</shortName>
        <shortName evidence="1">OMPdecase</shortName>
    </alternativeName>
</protein>
<keyword id="KW-0210">Decarboxylase</keyword>
<keyword id="KW-0456">Lyase</keyword>
<keyword id="KW-0665">Pyrimidine biosynthesis</keyword>
<dbReference type="EC" id="4.1.1.23" evidence="1"/>
<dbReference type="EMBL" id="CP000109">
    <property type="protein sequence ID" value="ABB41796.1"/>
    <property type="molecule type" value="Genomic_DNA"/>
</dbReference>
<dbReference type="SMR" id="Q31GC7"/>
<dbReference type="STRING" id="317025.Tcr_1201"/>
<dbReference type="KEGG" id="tcx:Tcr_1201"/>
<dbReference type="eggNOG" id="COG0284">
    <property type="taxonomic scope" value="Bacteria"/>
</dbReference>
<dbReference type="HOGENOM" id="CLU_067069_0_0_6"/>
<dbReference type="OrthoDB" id="9806203at2"/>
<dbReference type="UniPathway" id="UPA00070">
    <property type="reaction ID" value="UER00120"/>
</dbReference>
<dbReference type="GO" id="GO:0005829">
    <property type="term" value="C:cytosol"/>
    <property type="evidence" value="ECO:0007669"/>
    <property type="project" value="TreeGrafter"/>
</dbReference>
<dbReference type="GO" id="GO:0004590">
    <property type="term" value="F:orotidine-5'-phosphate decarboxylase activity"/>
    <property type="evidence" value="ECO:0007669"/>
    <property type="project" value="UniProtKB-UniRule"/>
</dbReference>
<dbReference type="GO" id="GO:0006207">
    <property type="term" value="P:'de novo' pyrimidine nucleobase biosynthetic process"/>
    <property type="evidence" value="ECO:0007669"/>
    <property type="project" value="InterPro"/>
</dbReference>
<dbReference type="GO" id="GO:0044205">
    <property type="term" value="P:'de novo' UMP biosynthetic process"/>
    <property type="evidence" value="ECO:0007669"/>
    <property type="project" value="UniProtKB-UniRule"/>
</dbReference>
<dbReference type="CDD" id="cd04725">
    <property type="entry name" value="OMP_decarboxylase_like"/>
    <property type="match status" value="1"/>
</dbReference>
<dbReference type="FunFam" id="3.20.20.70:FF:000015">
    <property type="entry name" value="Orotidine 5'-phosphate decarboxylase"/>
    <property type="match status" value="1"/>
</dbReference>
<dbReference type="Gene3D" id="3.20.20.70">
    <property type="entry name" value="Aldolase class I"/>
    <property type="match status" value="1"/>
</dbReference>
<dbReference type="HAMAP" id="MF_01200_B">
    <property type="entry name" value="OMPdecase_type1_B"/>
    <property type="match status" value="1"/>
</dbReference>
<dbReference type="InterPro" id="IPR013785">
    <property type="entry name" value="Aldolase_TIM"/>
</dbReference>
<dbReference type="InterPro" id="IPR014732">
    <property type="entry name" value="OMPdecase"/>
</dbReference>
<dbReference type="InterPro" id="IPR018089">
    <property type="entry name" value="OMPdecase_AS"/>
</dbReference>
<dbReference type="InterPro" id="IPR047596">
    <property type="entry name" value="OMPdecase_bac"/>
</dbReference>
<dbReference type="InterPro" id="IPR001754">
    <property type="entry name" value="OMPdeCOase_dom"/>
</dbReference>
<dbReference type="InterPro" id="IPR011060">
    <property type="entry name" value="RibuloseP-bd_barrel"/>
</dbReference>
<dbReference type="NCBIfam" id="NF001273">
    <property type="entry name" value="PRK00230.1"/>
    <property type="match status" value="1"/>
</dbReference>
<dbReference type="NCBIfam" id="TIGR01740">
    <property type="entry name" value="pyrF"/>
    <property type="match status" value="1"/>
</dbReference>
<dbReference type="PANTHER" id="PTHR32119">
    <property type="entry name" value="OROTIDINE 5'-PHOSPHATE DECARBOXYLASE"/>
    <property type="match status" value="1"/>
</dbReference>
<dbReference type="PANTHER" id="PTHR32119:SF2">
    <property type="entry name" value="OROTIDINE 5'-PHOSPHATE DECARBOXYLASE"/>
    <property type="match status" value="1"/>
</dbReference>
<dbReference type="Pfam" id="PF00215">
    <property type="entry name" value="OMPdecase"/>
    <property type="match status" value="1"/>
</dbReference>
<dbReference type="SMART" id="SM00934">
    <property type="entry name" value="OMPdecase"/>
    <property type="match status" value="1"/>
</dbReference>
<dbReference type="SUPFAM" id="SSF51366">
    <property type="entry name" value="Ribulose-phoshate binding barrel"/>
    <property type="match status" value="1"/>
</dbReference>
<dbReference type="PROSITE" id="PS00156">
    <property type="entry name" value="OMPDECASE"/>
    <property type="match status" value="1"/>
</dbReference>
<name>PYRF_HYDCU</name>
<accession>Q31GC7</accession>
<comment type="function">
    <text evidence="1">Catalyzes the decarboxylation of orotidine 5'-monophosphate (OMP) to uridine 5'-monophosphate (UMP).</text>
</comment>
<comment type="catalytic activity">
    <reaction evidence="1">
        <text>orotidine 5'-phosphate + H(+) = UMP + CO2</text>
        <dbReference type="Rhea" id="RHEA:11596"/>
        <dbReference type="ChEBI" id="CHEBI:15378"/>
        <dbReference type="ChEBI" id="CHEBI:16526"/>
        <dbReference type="ChEBI" id="CHEBI:57538"/>
        <dbReference type="ChEBI" id="CHEBI:57865"/>
        <dbReference type="EC" id="4.1.1.23"/>
    </reaction>
</comment>
<comment type="pathway">
    <text evidence="1">Pyrimidine metabolism; UMP biosynthesis via de novo pathway; UMP from orotate: step 2/2.</text>
</comment>
<comment type="subunit">
    <text evidence="1">Homodimer.</text>
</comment>
<comment type="similarity">
    <text evidence="1">Belongs to the OMP decarboxylase family. Type 1 subfamily.</text>
</comment>
<organism>
    <name type="scientific">Hydrogenovibrio crunogenus (strain DSM 25203 / XCL-2)</name>
    <name type="common">Thiomicrospira crunogena</name>
    <dbReference type="NCBI Taxonomy" id="317025"/>
    <lineage>
        <taxon>Bacteria</taxon>
        <taxon>Pseudomonadati</taxon>
        <taxon>Pseudomonadota</taxon>
        <taxon>Gammaproteobacteria</taxon>
        <taxon>Thiotrichales</taxon>
        <taxon>Piscirickettsiaceae</taxon>
        <taxon>Hydrogenovibrio</taxon>
    </lineage>
</organism>